<reference key="1">
    <citation type="journal article" date="2008" name="BMC Genomics">
        <title>Complete genome of Phenylobacterium zucineum - a novel facultative intracellular bacterium isolated from human erythroleukemia cell line K562.</title>
        <authorList>
            <person name="Luo Y."/>
            <person name="Xu X."/>
            <person name="Ding Z."/>
            <person name="Liu Z."/>
            <person name="Zhang B."/>
            <person name="Yan Z."/>
            <person name="Sun J."/>
            <person name="Hu S."/>
            <person name="Hu X."/>
        </authorList>
    </citation>
    <scope>NUCLEOTIDE SEQUENCE [LARGE SCALE GENOMIC DNA]</scope>
    <source>
        <strain>HLK1</strain>
    </source>
</reference>
<feature type="chain" id="PRO_1000100590" description="Adenylate kinase">
    <location>
        <begin position="1"/>
        <end position="190"/>
    </location>
</feature>
<feature type="region of interest" description="NMP" evidence="1">
    <location>
        <begin position="30"/>
        <end position="59"/>
    </location>
</feature>
<feature type="region of interest" description="LID" evidence="1">
    <location>
        <begin position="126"/>
        <end position="136"/>
    </location>
</feature>
<feature type="binding site" evidence="1">
    <location>
        <begin position="10"/>
        <end position="15"/>
    </location>
    <ligand>
        <name>ATP</name>
        <dbReference type="ChEBI" id="CHEBI:30616"/>
    </ligand>
</feature>
<feature type="binding site" evidence="1">
    <location>
        <position position="31"/>
    </location>
    <ligand>
        <name>AMP</name>
        <dbReference type="ChEBI" id="CHEBI:456215"/>
    </ligand>
</feature>
<feature type="binding site" evidence="1">
    <location>
        <position position="36"/>
    </location>
    <ligand>
        <name>AMP</name>
        <dbReference type="ChEBI" id="CHEBI:456215"/>
    </ligand>
</feature>
<feature type="binding site" evidence="1">
    <location>
        <begin position="57"/>
        <end position="59"/>
    </location>
    <ligand>
        <name>AMP</name>
        <dbReference type="ChEBI" id="CHEBI:456215"/>
    </ligand>
</feature>
<feature type="binding site" evidence="1">
    <location>
        <begin position="85"/>
        <end position="88"/>
    </location>
    <ligand>
        <name>AMP</name>
        <dbReference type="ChEBI" id="CHEBI:456215"/>
    </ligand>
</feature>
<feature type="binding site" evidence="1">
    <location>
        <position position="92"/>
    </location>
    <ligand>
        <name>AMP</name>
        <dbReference type="ChEBI" id="CHEBI:456215"/>
    </ligand>
</feature>
<feature type="binding site" evidence="1">
    <location>
        <position position="127"/>
    </location>
    <ligand>
        <name>ATP</name>
        <dbReference type="ChEBI" id="CHEBI:30616"/>
    </ligand>
</feature>
<feature type="binding site" evidence="1">
    <location>
        <position position="133"/>
    </location>
    <ligand>
        <name>AMP</name>
        <dbReference type="ChEBI" id="CHEBI:456215"/>
    </ligand>
</feature>
<feature type="binding site" evidence="1">
    <location>
        <position position="144"/>
    </location>
    <ligand>
        <name>AMP</name>
        <dbReference type="ChEBI" id="CHEBI:456215"/>
    </ligand>
</feature>
<feature type="binding site" evidence="1">
    <location>
        <position position="172"/>
    </location>
    <ligand>
        <name>ATP</name>
        <dbReference type="ChEBI" id="CHEBI:30616"/>
    </ligand>
</feature>
<gene>
    <name evidence="1" type="primary">adk</name>
    <name type="ordered locus">PHZ_c1251</name>
</gene>
<sequence>MNLILFGPPAAGKGTQAKRLVEQRRMVQLSTGDMLRAAIASGSELGQRVSGIMERGELVSDAIVIELIEQRLPEAEAAGGAIFDGFPRTLAQAEALDAMLAGRGRRIDLVVRLKVDDAALMQRIAGRFAESGRADDNPESFKVRLDAYNRQTAPLLPYYEGQGKLVEVDGMGSIDQVAAAIDAALTGAAA</sequence>
<name>KAD_PHEZH</name>
<organism>
    <name type="scientific">Phenylobacterium zucineum (strain HLK1)</name>
    <dbReference type="NCBI Taxonomy" id="450851"/>
    <lineage>
        <taxon>Bacteria</taxon>
        <taxon>Pseudomonadati</taxon>
        <taxon>Pseudomonadota</taxon>
        <taxon>Alphaproteobacteria</taxon>
        <taxon>Caulobacterales</taxon>
        <taxon>Caulobacteraceae</taxon>
        <taxon>Phenylobacterium</taxon>
    </lineage>
</organism>
<keyword id="KW-0067">ATP-binding</keyword>
<keyword id="KW-0963">Cytoplasm</keyword>
<keyword id="KW-0418">Kinase</keyword>
<keyword id="KW-0545">Nucleotide biosynthesis</keyword>
<keyword id="KW-0547">Nucleotide-binding</keyword>
<keyword id="KW-1185">Reference proteome</keyword>
<keyword id="KW-0808">Transferase</keyword>
<dbReference type="EC" id="2.7.4.3" evidence="1"/>
<dbReference type="EMBL" id="CP000747">
    <property type="protein sequence ID" value="ACG77665.1"/>
    <property type="molecule type" value="Genomic_DNA"/>
</dbReference>
<dbReference type="RefSeq" id="WP_012521809.1">
    <property type="nucleotide sequence ID" value="NC_011144.1"/>
</dbReference>
<dbReference type="SMR" id="B4R8N8"/>
<dbReference type="STRING" id="450851.PHZ_c1251"/>
<dbReference type="KEGG" id="pzu:PHZ_c1251"/>
<dbReference type="eggNOG" id="COG0563">
    <property type="taxonomic scope" value="Bacteria"/>
</dbReference>
<dbReference type="HOGENOM" id="CLU_032354_4_1_5"/>
<dbReference type="OrthoDB" id="9805030at2"/>
<dbReference type="UniPathway" id="UPA00588">
    <property type="reaction ID" value="UER00649"/>
</dbReference>
<dbReference type="Proteomes" id="UP000001868">
    <property type="component" value="Chromosome"/>
</dbReference>
<dbReference type="GO" id="GO:0005737">
    <property type="term" value="C:cytoplasm"/>
    <property type="evidence" value="ECO:0007669"/>
    <property type="project" value="UniProtKB-SubCell"/>
</dbReference>
<dbReference type="GO" id="GO:0004017">
    <property type="term" value="F:adenylate kinase activity"/>
    <property type="evidence" value="ECO:0007669"/>
    <property type="project" value="UniProtKB-UniRule"/>
</dbReference>
<dbReference type="GO" id="GO:0005524">
    <property type="term" value="F:ATP binding"/>
    <property type="evidence" value="ECO:0007669"/>
    <property type="project" value="UniProtKB-UniRule"/>
</dbReference>
<dbReference type="GO" id="GO:0044209">
    <property type="term" value="P:AMP salvage"/>
    <property type="evidence" value="ECO:0007669"/>
    <property type="project" value="UniProtKB-UniRule"/>
</dbReference>
<dbReference type="CDD" id="cd01428">
    <property type="entry name" value="ADK"/>
    <property type="match status" value="1"/>
</dbReference>
<dbReference type="Gene3D" id="3.40.50.300">
    <property type="entry name" value="P-loop containing nucleotide triphosphate hydrolases"/>
    <property type="match status" value="1"/>
</dbReference>
<dbReference type="HAMAP" id="MF_00235">
    <property type="entry name" value="Adenylate_kinase_Adk"/>
    <property type="match status" value="1"/>
</dbReference>
<dbReference type="InterPro" id="IPR000850">
    <property type="entry name" value="Adenylat/UMP-CMP_kin"/>
</dbReference>
<dbReference type="InterPro" id="IPR033690">
    <property type="entry name" value="Adenylat_kinase_CS"/>
</dbReference>
<dbReference type="InterPro" id="IPR027417">
    <property type="entry name" value="P-loop_NTPase"/>
</dbReference>
<dbReference type="NCBIfam" id="NF001381">
    <property type="entry name" value="PRK00279.1-3"/>
    <property type="match status" value="1"/>
</dbReference>
<dbReference type="NCBIfam" id="NF011100">
    <property type="entry name" value="PRK14527.1"/>
    <property type="match status" value="1"/>
</dbReference>
<dbReference type="NCBIfam" id="NF011104">
    <property type="entry name" value="PRK14531.1"/>
    <property type="match status" value="1"/>
</dbReference>
<dbReference type="NCBIfam" id="NF011105">
    <property type="entry name" value="PRK14532.1"/>
    <property type="match status" value="1"/>
</dbReference>
<dbReference type="PANTHER" id="PTHR23359">
    <property type="entry name" value="NUCLEOTIDE KINASE"/>
    <property type="match status" value="1"/>
</dbReference>
<dbReference type="Pfam" id="PF00406">
    <property type="entry name" value="ADK"/>
    <property type="match status" value="1"/>
</dbReference>
<dbReference type="PRINTS" id="PR00094">
    <property type="entry name" value="ADENYLTKNASE"/>
</dbReference>
<dbReference type="SUPFAM" id="SSF52540">
    <property type="entry name" value="P-loop containing nucleoside triphosphate hydrolases"/>
    <property type="match status" value="1"/>
</dbReference>
<dbReference type="PROSITE" id="PS00113">
    <property type="entry name" value="ADENYLATE_KINASE"/>
    <property type="match status" value="1"/>
</dbReference>
<evidence type="ECO:0000255" key="1">
    <source>
        <dbReference type="HAMAP-Rule" id="MF_00235"/>
    </source>
</evidence>
<protein>
    <recommendedName>
        <fullName evidence="1">Adenylate kinase</fullName>
        <shortName evidence="1">AK</shortName>
        <ecNumber evidence="1">2.7.4.3</ecNumber>
    </recommendedName>
    <alternativeName>
        <fullName evidence="1">ATP-AMP transphosphorylase</fullName>
    </alternativeName>
    <alternativeName>
        <fullName evidence="1">ATP:AMP phosphotransferase</fullName>
    </alternativeName>
    <alternativeName>
        <fullName evidence="1">Adenylate monophosphate kinase</fullName>
    </alternativeName>
</protein>
<proteinExistence type="inferred from homology"/>
<comment type="function">
    <text evidence="1">Catalyzes the reversible transfer of the terminal phosphate group between ATP and AMP. Plays an important role in cellular energy homeostasis and in adenine nucleotide metabolism.</text>
</comment>
<comment type="catalytic activity">
    <reaction evidence="1">
        <text>AMP + ATP = 2 ADP</text>
        <dbReference type="Rhea" id="RHEA:12973"/>
        <dbReference type="ChEBI" id="CHEBI:30616"/>
        <dbReference type="ChEBI" id="CHEBI:456215"/>
        <dbReference type="ChEBI" id="CHEBI:456216"/>
        <dbReference type="EC" id="2.7.4.3"/>
    </reaction>
</comment>
<comment type="pathway">
    <text evidence="1">Purine metabolism; AMP biosynthesis via salvage pathway; AMP from ADP: step 1/1.</text>
</comment>
<comment type="subunit">
    <text evidence="1">Monomer.</text>
</comment>
<comment type="subcellular location">
    <subcellularLocation>
        <location evidence="1">Cytoplasm</location>
    </subcellularLocation>
</comment>
<comment type="domain">
    <text evidence="1">Consists of three domains, a large central CORE domain and two small peripheral domains, NMPbind and LID, which undergo movements during catalysis. The LID domain closes over the site of phosphoryl transfer upon ATP binding. Assembling and dissambling the active center during each catalytic cycle provides an effective means to prevent ATP hydrolysis.</text>
</comment>
<comment type="similarity">
    <text evidence="1">Belongs to the adenylate kinase family.</text>
</comment>
<accession>B4R8N8</accession>